<comment type="function">
    <text evidence="1">Nucleotide-binding protein.</text>
</comment>
<comment type="similarity">
    <text evidence="1">Belongs to the YajQ family.</text>
</comment>
<comment type="sequence caution" evidence="2">
    <conflict type="erroneous initiation">
        <sequence resource="EMBL-CDS" id="BAE83758"/>
    </conflict>
</comment>
<reference key="1">
    <citation type="journal article" date="2006" name="J. Bacteriol.">
        <title>Complete genome sequence of the dehalorespiring bacterium Desulfitobacterium hafniense Y51 and comparison with Dehalococcoides ethenogenes 195.</title>
        <authorList>
            <person name="Nonaka H."/>
            <person name="Keresztes G."/>
            <person name="Shinoda Y."/>
            <person name="Ikenaga Y."/>
            <person name="Abe M."/>
            <person name="Naito K."/>
            <person name="Inatomi K."/>
            <person name="Furukawa K."/>
            <person name="Inui M."/>
            <person name="Yukawa H."/>
        </authorList>
    </citation>
    <scope>NUCLEOTIDE SEQUENCE [LARGE SCALE GENOMIC DNA]</scope>
    <source>
        <strain>Y51</strain>
    </source>
</reference>
<name>Y1969_DESHY</name>
<gene>
    <name type="ordered locus">DSY1969</name>
</gene>
<protein>
    <recommendedName>
        <fullName evidence="1">Nucleotide-binding protein DSY1969</fullName>
    </recommendedName>
</protein>
<organism>
    <name type="scientific">Desulfitobacterium hafniense (strain Y51)</name>
    <dbReference type="NCBI Taxonomy" id="138119"/>
    <lineage>
        <taxon>Bacteria</taxon>
        <taxon>Bacillati</taxon>
        <taxon>Bacillota</taxon>
        <taxon>Clostridia</taxon>
        <taxon>Eubacteriales</taxon>
        <taxon>Desulfitobacteriaceae</taxon>
        <taxon>Desulfitobacterium</taxon>
    </lineage>
</organism>
<feature type="chain" id="PRO_0000261931" description="Nucleotide-binding protein DSY1969">
    <location>
        <begin position="1"/>
        <end position="163"/>
    </location>
</feature>
<proteinExistence type="inferred from homology"/>
<accession>Q24W34</accession>
<dbReference type="EMBL" id="AP008230">
    <property type="protein sequence ID" value="BAE83758.1"/>
    <property type="status" value="ALT_INIT"/>
    <property type="molecule type" value="Genomic_DNA"/>
</dbReference>
<dbReference type="RefSeq" id="WP_015944407.1">
    <property type="nucleotide sequence ID" value="NC_007907.1"/>
</dbReference>
<dbReference type="SMR" id="Q24W34"/>
<dbReference type="STRING" id="138119.DSY1969"/>
<dbReference type="KEGG" id="dsy:DSY1969"/>
<dbReference type="eggNOG" id="COG1666">
    <property type="taxonomic scope" value="Bacteria"/>
</dbReference>
<dbReference type="HOGENOM" id="CLU_099839_1_0_9"/>
<dbReference type="Proteomes" id="UP000001946">
    <property type="component" value="Chromosome"/>
</dbReference>
<dbReference type="GO" id="GO:0005829">
    <property type="term" value="C:cytosol"/>
    <property type="evidence" value="ECO:0007669"/>
    <property type="project" value="TreeGrafter"/>
</dbReference>
<dbReference type="GO" id="GO:0000166">
    <property type="term" value="F:nucleotide binding"/>
    <property type="evidence" value="ECO:0007669"/>
    <property type="project" value="TreeGrafter"/>
</dbReference>
<dbReference type="CDD" id="cd11740">
    <property type="entry name" value="YajQ_like"/>
    <property type="match status" value="1"/>
</dbReference>
<dbReference type="Gene3D" id="3.30.70.860">
    <property type="match status" value="1"/>
</dbReference>
<dbReference type="Gene3D" id="3.30.70.990">
    <property type="entry name" value="YajQ-like, domain 2"/>
    <property type="match status" value="1"/>
</dbReference>
<dbReference type="HAMAP" id="MF_00632">
    <property type="entry name" value="YajQ"/>
    <property type="match status" value="1"/>
</dbReference>
<dbReference type="InterPro" id="IPR007551">
    <property type="entry name" value="DUF520"/>
</dbReference>
<dbReference type="InterPro" id="IPR035571">
    <property type="entry name" value="UPF0234-like_C"/>
</dbReference>
<dbReference type="InterPro" id="IPR035570">
    <property type="entry name" value="UPF0234_N"/>
</dbReference>
<dbReference type="InterPro" id="IPR036183">
    <property type="entry name" value="YajQ-like_sf"/>
</dbReference>
<dbReference type="NCBIfam" id="NF003819">
    <property type="entry name" value="PRK05412.1"/>
    <property type="match status" value="1"/>
</dbReference>
<dbReference type="PANTHER" id="PTHR30476">
    <property type="entry name" value="UPF0234 PROTEIN YAJQ"/>
    <property type="match status" value="1"/>
</dbReference>
<dbReference type="PANTHER" id="PTHR30476:SF0">
    <property type="entry name" value="UPF0234 PROTEIN YAJQ"/>
    <property type="match status" value="1"/>
</dbReference>
<dbReference type="Pfam" id="PF04461">
    <property type="entry name" value="DUF520"/>
    <property type="match status" value="1"/>
</dbReference>
<dbReference type="SUPFAM" id="SSF89963">
    <property type="entry name" value="YajQ-like"/>
    <property type="match status" value="2"/>
</dbReference>
<sequence length="163" mass="18529">MAKDSSFDIVSKVEMQEVINAVHQAQKEIEQRFDFKNSKSSLELQDEKIILVSDDDFKLRNVIDILESKLVKRQVSLKALEYGKVQPAAGDTVRQEVKLVQGISQDKGKEINKLIKDSKIKVSSSIQGDQVRVTGKNKDDLQEVIALLRKQDLGIDLQFINYR</sequence>
<keyword id="KW-0547">Nucleotide-binding</keyword>
<keyword id="KW-1185">Reference proteome</keyword>
<evidence type="ECO:0000255" key="1">
    <source>
        <dbReference type="HAMAP-Rule" id="MF_00632"/>
    </source>
</evidence>
<evidence type="ECO:0000305" key="2"/>